<dbReference type="EMBL" id="AAFW02000032">
    <property type="protein sequence ID" value="EDN63578.1"/>
    <property type="molecule type" value="Genomic_DNA"/>
</dbReference>
<dbReference type="SMR" id="A6ZP88"/>
<dbReference type="HOGENOM" id="CLU_018195_3_1_1"/>
<dbReference type="Proteomes" id="UP000007060">
    <property type="component" value="Unassembled WGS sequence"/>
</dbReference>
<dbReference type="GO" id="GO:0005849">
    <property type="term" value="C:mRNA cleavage factor complex"/>
    <property type="evidence" value="ECO:0007669"/>
    <property type="project" value="UniProtKB-UniRule"/>
</dbReference>
<dbReference type="GO" id="GO:0005524">
    <property type="term" value="F:ATP binding"/>
    <property type="evidence" value="ECO:0007669"/>
    <property type="project" value="UniProtKB-UniRule"/>
</dbReference>
<dbReference type="GO" id="GO:0051731">
    <property type="term" value="F:polynucleotide 5'-hydroxyl-kinase activity"/>
    <property type="evidence" value="ECO:0007669"/>
    <property type="project" value="InterPro"/>
</dbReference>
<dbReference type="GO" id="GO:0031124">
    <property type="term" value="P:mRNA 3'-end processing"/>
    <property type="evidence" value="ECO:0007669"/>
    <property type="project" value="UniProtKB-UniRule"/>
</dbReference>
<dbReference type="GO" id="GO:0006388">
    <property type="term" value="P:tRNA splicing, via endonucleolytic cleavage and ligation"/>
    <property type="evidence" value="ECO:0007669"/>
    <property type="project" value="TreeGrafter"/>
</dbReference>
<dbReference type="FunFam" id="2.40.30.330:FF:000003">
    <property type="entry name" value="mRNA cleavage and polyadenylation factor CLP1"/>
    <property type="match status" value="1"/>
</dbReference>
<dbReference type="FunFam" id="3.40.50.300:FF:002525">
    <property type="entry name" value="mRNA cleavage and polyadenylation factor CLP1"/>
    <property type="match status" value="1"/>
</dbReference>
<dbReference type="Gene3D" id="2.60.120.1030">
    <property type="entry name" value="Clp1, DNA binding domain"/>
    <property type="match status" value="1"/>
</dbReference>
<dbReference type="Gene3D" id="3.40.50.300">
    <property type="entry name" value="P-loop containing nucleotide triphosphate hydrolases"/>
    <property type="match status" value="1"/>
</dbReference>
<dbReference type="Gene3D" id="2.40.30.330">
    <property type="entry name" value="Pre-mRNA cleavage complex subunit Clp1, C-terminal domain"/>
    <property type="match status" value="1"/>
</dbReference>
<dbReference type="HAMAP" id="MF_03035">
    <property type="entry name" value="Clp1"/>
    <property type="match status" value="1"/>
</dbReference>
<dbReference type="InterPro" id="IPR028606">
    <property type="entry name" value="Clp1"/>
</dbReference>
<dbReference type="InterPro" id="IPR045116">
    <property type="entry name" value="Clp1/Grc3"/>
</dbReference>
<dbReference type="InterPro" id="IPR010655">
    <property type="entry name" value="Clp1_C"/>
</dbReference>
<dbReference type="InterPro" id="IPR038238">
    <property type="entry name" value="Clp1_C_sf"/>
</dbReference>
<dbReference type="InterPro" id="IPR032324">
    <property type="entry name" value="Clp1_N"/>
</dbReference>
<dbReference type="InterPro" id="IPR038239">
    <property type="entry name" value="Clp1_N_sf"/>
</dbReference>
<dbReference type="InterPro" id="IPR032319">
    <property type="entry name" value="CLP1_P"/>
</dbReference>
<dbReference type="InterPro" id="IPR027417">
    <property type="entry name" value="P-loop_NTPase"/>
</dbReference>
<dbReference type="PANTHER" id="PTHR12755">
    <property type="entry name" value="CLEAVAGE/POLYADENYLATION FACTOR IA SUBUNIT CLP1P"/>
    <property type="match status" value="1"/>
</dbReference>
<dbReference type="PANTHER" id="PTHR12755:SF6">
    <property type="entry name" value="POLYRIBONUCLEOTIDE 5'-HYDROXYL-KINASE CLP1"/>
    <property type="match status" value="1"/>
</dbReference>
<dbReference type="Pfam" id="PF06807">
    <property type="entry name" value="Clp1"/>
    <property type="match status" value="1"/>
</dbReference>
<dbReference type="Pfam" id="PF16573">
    <property type="entry name" value="CLP1_N"/>
    <property type="match status" value="1"/>
</dbReference>
<dbReference type="Pfam" id="PF16575">
    <property type="entry name" value="CLP1_P"/>
    <property type="match status" value="1"/>
</dbReference>
<dbReference type="SUPFAM" id="SSF52540">
    <property type="entry name" value="P-loop containing nucleoside triphosphate hydrolases"/>
    <property type="match status" value="1"/>
</dbReference>
<protein>
    <recommendedName>
        <fullName evidence="2">mRNA cleavage and polyadenylation factor CLP1</fullName>
    </recommendedName>
</protein>
<evidence type="ECO:0000250" key="1"/>
<evidence type="ECO:0000255" key="2">
    <source>
        <dbReference type="HAMAP-Rule" id="MF_03035"/>
    </source>
</evidence>
<evidence type="ECO:0000305" key="3"/>
<comment type="function">
    <text evidence="2">Component of the cleavage factor IA (CF IA) complex, which is involved in the endonucleolytic cleavage during polyadenylation-dependent pre-mRNA 3'-end formation. Associates with HRB1/CF IB to form the cleavage factor I (CF I) complex. CF I is required for correct positioning of a larger protein complex, the cleavage and polyadenylation factor (CPF) complex, which contains the catalytic subunits executing mRNA cleavage and polyadenylation. CLP1 mediates interactions between CF IA and CPF factors. CLP1 is also involved in maintaining the CF IA interaction with the C-terminal domain of RNA Pol II largest subunit via PCF11, which links pre-mRNA 3'-end processing to transcription termination.</text>
</comment>
<comment type="subunit">
    <text evidence="1">Component of the cleavage factor IA (CF IA) complex, which is a heterohexameric complex with 2:2:1:1 stoichiometry of RNA14, RNA15, PCF11 and CLP1. It contains 2 copies of an RNA14-RNA15 dimer and 1 copy of CLP1-PCF11. The complex interacts with the cleavage factor HRB1/CF IB to form the cleavage factor I (CF I) complex, and binds to RNA. Interacts directly with PCF11. Interacts with the CPF components CFT1, PTA1, PFS2, YSH1 and SSU72 (By similarity).</text>
</comment>
<comment type="subcellular location">
    <subcellularLocation>
        <location evidence="2">Nucleus</location>
    </subcellularLocation>
</comment>
<comment type="similarity">
    <text evidence="2">Belongs to the Clp1 family. Clp1 subfamily.</text>
</comment>
<comment type="caution">
    <text evidence="3">May lack the polyribonucleotide 5'-hydroxyl-kinase and polynucleotide 5'-hydroxyl-kinase activities that are characteristic of the human ortholog.</text>
</comment>
<proteinExistence type="inferred from homology"/>
<name>CLP1_YEAS7</name>
<organism>
    <name type="scientific">Saccharomyces cerevisiae (strain YJM789)</name>
    <name type="common">Baker's yeast</name>
    <dbReference type="NCBI Taxonomy" id="307796"/>
    <lineage>
        <taxon>Eukaryota</taxon>
        <taxon>Fungi</taxon>
        <taxon>Dikarya</taxon>
        <taxon>Ascomycota</taxon>
        <taxon>Saccharomycotina</taxon>
        <taxon>Saccharomycetes</taxon>
        <taxon>Saccharomycetales</taxon>
        <taxon>Saccharomycetaceae</taxon>
        <taxon>Saccharomyces</taxon>
    </lineage>
</organism>
<reference key="1">
    <citation type="journal article" date="2007" name="Proc. Natl. Acad. Sci. U.S.A.">
        <title>Genome sequencing and comparative analysis of Saccharomyces cerevisiae strain YJM789.</title>
        <authorList>
            <person name="Wei W."/>
            <person name="McCusker J.H."/>
            <person name="Hyman R.W."/>
            <person name="Jones T."/>
            <person name="Ning Y."/>
            <person name="Cao Z."/>
            <person name="Gu Z."/>
            <person name="Bruno D."/>
            <person name="Miranda M."/>
            <person name="Nguyen M."/>
            <person name="Wilhelmy J."/>
            <person name="Komp C."/>
            <person name="Tamse R."/>
            <person name="Wang X."/>
            <person name="Jia P."/>
            <person name="Luedi P."/>
            <person name="Oefner P.J."/>
            <person name="David L."/>
            <person name="Dietrich F.S."/>
            <person name="Li Y."/>
            <person name="Davis R.W."/>
            <person name="Steinmetz L.M."/>
        </authorList>
    </citation>
    <scope>NUCLEOTIDE SEQUENCE [LARGE SCALE GENOMIC DNA]</scope>
    <source>
        <strain>YJM789</strain>
    </source>
</reference>
<accession>A6ZP88</accession>
<keyword id="KW-0067">ATP-binding</keyword>
<keyword id="KW-0507">mRNA processing</keyword>
<keyword id="KW-0547">Nucleotide-binding</keyword>
<keyword id="KW-0539">Nucleus</keyword>
<feature type="chain" id="PRO_0000375219" description="mRNA cleavage and polyadenylation factor CLP1">
    <location>
        <begin position="1"/>
        <end position="445"/>
    </location>
</feature>
<feature type="binding site" evidence="2">
    <location>
        <position position="33"/>
    </location>
    <ligand>
        <name>ATP</name>
        <dbReference type="ChEBI" id="CHEBI:30616"/>
    </ligand>
</feature>
<feature type="binding site" evidence="2">
    <location>
        <position position="72"/>
    </location>
    <ligand>
        <name>ATP</name>
        <dbReference type="ChEBI" id="CHEBI:30616"/>
    </ligand>
</feature>
<feature type="binding site" evidence="2">
    <location>
        <begin position="133"/>
        <end position="138"/>
    </location>
    <ligand>
        <name>ATP</name>
        <dbReference type="ChEBI" id="CHEBI:30616"/>
    </ligand>
</feature>
<sequence length="445" mass="50226">MASLPGIDEHTTSEELITGDNEWHKLVIPKGSDWQIDLKAEGKLIVKVNSGIVEIFGTELAVDDEYTFQNWKFPIYAVEETELLWKCPDLTTNTITVKPNHTMKYIYNLHFMLEKIRMSNFEGPRVVIVGGSQTGKTSLSRTLCSYALKFNAYQPLYINLDPQQPIFTVPGCISATPISDILDAQLPTWGQSLTSGATLLHNKQPMVKNFGLERINENKDLYLECISQLGQVVGQRLHLDPQVRRSGCIVDTPSISQLDENLAELHHIIEKLNVNIMLVLCSETDPLWEKVKKTFGPELGNNNIFFIPKLDGVSAVDDVYKRSLQRTSIREYFYGSLDTALSPYAIGVDYEDLTIWKPSNVFDNEVGRVELFPVTITPSNLQHAIIAITFAERRADQATVIKSPILGFALITEVNEKRRKLRVLLPVPGRLPSKAMILTSYRYLE</sequence>
<gene>
    <name evidence="2" type="primary">CLP1</name>
    <name type="ORF">SCY_5303</name>
</gene>